<name>THIC_PSEP1</name>
<evidence type="ECO:0000255" key="1">
    <source>
        <dbReference type="HAMAP-Rule" id="MF_00089"/>
    </source>
</evidence>
<evidence type="ECO:0000256" key="2">
    <source>
        <dbReference type="SAM" id="MobiDB-lite"/>
    </source>
</evidence>
<accession>A5W9V8</accession>
<dbReference type="EC" id="4.1.99.17" evidence="1"/>
<dbReference type="EMBL" id="CP000712">
    <property type="protein sequence ID" value="ABQ80918.1"/>
    <property type="molecule type" value="Genomic_DNA"/>
</dbReference>
<dbReference type="SMR" id="A5W9V8"/>
<dbReference type="KEGG" id="ppf:Pput_4798"/>
<dbReference type="eggNOG" id="COG0422">
    <property type="taxonomic scope" value="Bacteria"/>
</dbReference>
<dbReference type="HOGENOM" id="CLU_013181_2_1_6"/>
<dbReference type="UniPathway" id="UPA00060"/>
<dbReference type="GO" id="GO:0005829">
    <property type="term" value="C:cytosol"/>
    <property type="evidence" value="ECO:0007669"/>
    <property type="project" value="TreeGrafter"/>
</dbReference>
<dbReference type="GO" id="GO:0051539">
    <property type="term" value="F:4 iron, 4 sulfur cluster binding"/>
    <property type="evidence" value="ECO:0007669"/>
    <property type="project" value="UniProtKB-KW"/>
</dbReference>
<dbReference type="GO" id="GO:0016830">
    <property type="term" value="F:carbon-carbon lyase activity"/>
    <property type="evidence" value="ECO:0007669"/>
    <property type="project" value="InterPro"/>
</dbReference>
<dbReference type="GO" id="GO:0008270">
    <property type="term" value="F:zinc ion binding"/>
    <property type="evidence" value="ECO:0007669"/>
    <property type="project" value="UniProtKB-UniRule"/>
</dbReference>
<dbReference type="GO" id="GO:0009228">
    <property type="term" value="P:thiamine biosynthetic process"/>
    <property type="evidence" value="ECO:0007669"/>
    <property type="project" value="UniProtKB-KW"/>
</dbReference>
<dbReference type="GO" id="GO:0009229">
    <property type="term" value="P:thiamine diphosphate biosynthetic process"/>
    <property type="evidence" value="ECO:0007669"/>
    <property type="project" value="UniProtKB-UniRule"/>
</dbReference>
<dbReference type="FunFam" id="3.20.20.540:FF:000001">
    <property type="entry name" value="Phosphomethylpyrimidine synthase"/>
    <property type="match status" value="1"/>
</dbReference>
<dbReference type="Gene3D" id="6.10.250.620">
    <property type="match status" value="1"/>
</dbReference>
<dbReference type="Gene3D" id="3.20.20.540">
    <property type="entry name" value="Radical SAM ThiC family, central domain"/>
    <property type="match status" value="1"/>
</dbReference>
<dbReference type="HAMAP" id="MF_00089">
    <property type="entry name" value="ThiC"/>
    <property type="match status" value="1"/>
</dbReference>
<dbReference type="InterPro" id="IPR037509">
    <property type="entry name" value="ThiC"/>
</dbReference>
<dbReference type="InterPro" id="IPR025747">
    <property type="entry name" value="ThiC-associated_dom"/>
</dbReference>
<dbReference type="InterPro" id="IPR038521">
    <property type="entry name" value="ThiC/Bza_core_dom"/>
</dbReference>
<dbReference type="InterPro" id="IPR002817">
    <property type="entry name" value="ThiC/BzaA/B"/>
</dbReference>
<dbReference type="NCBIfam" id="NF006763">
    <property type="entry name" value="PRK09284.1"/>
    <property type="match status" value="1"/>
</dbReference>
<dbReference type="NCBIfam" id="NF009895">
    <property type="entry name" value="PRK13352.1"/>
    <property type="match status" value="1"/>
</dbReference>
<dbReference type="NCBIfam" id="TIGR00190">
    <property type="entry name" value="thiC"/>
    <property type="match status" value="1"/>
</dbReference>
<dbReference type="PANTHER" id="PTHR30557:SF1">
    <property type="entry name" value="PHOSPHOMETHYLPYRIMIDINE SYNTHASE, CHLOROPLASTIC"/>
    <property type="match status" value="1"/>
</dbReference>
<dbReference type="PANTHER" id="PTHR30557">
    <property type="entry name" value="THIAMINE BIOSYNTHESIS PROTEIN THIC"/>
    <property type="match status" value="1"/>
</dbReference>
<dbReference type="Pfam" id="PF13667">
    <property type="entry name" value="ThiC-associated"/>
    <property type="match status" value="1"/>
</dbReference>
<dbReference type="Pfam" id="PF01964">
    <property type="entry name" value="ThiC_Rad_SAM"/>
    <property type="match status" value="1"/>
</dbReference>
<dbReference type="SFLD" id="SFLDF00407">
    <property type="entry name" value="phosphomethylpyrimidine_syntha"/>
    <property type="match status" value="1"/>
</dbReference>
<dbReference type="SFLD" id="SFLDG01114">
    <property type="entry name" value="phosphomethylpyrimidine_syntha"/>
    <property type="match status" value="1"/>
</dbReference>
<dbReference type="SFLD" id="SFLDS00113">
    <property type="entry name" value="Radical_SAM_Phosphomethylpyrim"/>
    <property type="match status" value="1"/>
</dbReference>
<reference key="1">
    <citation type="submission" date="2007-05" db="EMBL/GenBank/DDBJ databases">
        <title>Complete sequence of Pseudomonas putida F1.</title>
        <authorList>
            <consortium name="US DOE Joint Genome Institute"/>
            <person name="Copeland A."/>
            <person name="Lucas S."/>
            <person name="Lapidus A."/>
            <person name="Barry K."/>
            <person name="Detter J.C."/>
            <person name="Glavina del Rio T."/>
            <person name="Hammon N."/>
            <person name="Israni S."/>
            <person name="Dalin E."/>
            <person name="Tice H."/>
            <person name="Pitluck S."/>
            <person name="Chain P."/>
            <person name="Malfatti S."/>
            <person name="Shin M."/>
            <person name="Vergez L."/>
            <person name="Schmutz J."/>
            <person name="Larimer F."/>
            <person name="Land M."/>
            <person name="Hauser L."/>
            <person name="Kyrpides N."/>
            <person name="Lykidis A."/>
            <person name="Parales R."/>
            <person name="Richardson P."/>
        </authorList>
    </citation>
    <scope>NUCLEOTIDE SEQUENCE [LARGE SCALE GENOMIC DNA]</scope>
    <source>
        <strain>ATCC 700007 / DSM 6899 / JCM 31910 / BCRC 17059 / LMG 24140 / F1</strain>
    </source>
</reference>
<protein>
    <recommendedName>
        <fullName evidence="1">Phosphomethylpyrimidine synthase</fullName>
        <ecNumber evidence="1">4.1.99.17</ecNumber>
    </recommendedName>
    <alternativeName>
        <fullName evidence="1">Hydroxymethylpyrimidine phosphate synthase</fullName>
        <shortName evidence="1">HMP-P synthase</shortName>
        <shortName evidence="1">HMP-phosphate synthase</shortName>
        <shortName evidence="1">HMPP synthase</shortName>
    </alternativeName>
    <alternativeName>
        <fullName evidence="1">Thiamine biosynthesis protein ThiC</fullName>
    </alternativeName>
</protein>
<gene>
    <name evidence="1" type="primary">thiC</name>
    <name type="ordered locus">Pput_4798</name>
</gene>
<proteinExistence type="inferred from homology"/>
<organism>
    <name type="scientific">Pseudomonas putida (strain ATCC 700007 / DSM 6899 / JCM 31910 / BCRC 17059 / LMG 24140 / F1)</name>
    <dbReference type="NCBI Taxonomy" id="351746"/>
    <lineage>
        <taxon>Bacteria</taxon>
        <taxon>Pseudomonadati</taxon>
        <taxon>Pseudomonadota</taxon>
        <taxon>Gammaproteobacteria</taxon>
        <taxon>Pseudomonadales</taxon>
        <taxon>Pseudomonadaceae</taxon>
        <taxon>Pseudomonas</taxon>
    </lineage>
</organism>
<keyword id="KW-0004">4Fe-4S</keyword>
<keyword id="KW-0408">Iron</keyword>
<keyword id="KW-0411">Iron-sulfur</keyword>
<keyword id="KW-0456">Lyase</keyword>
<keyword id="KW-0479">Metal-binding</keyword>
<keyword id="KW-0949">S-adenosyl-L-methionine</keyword>
<keyword id="KW-0784">Thiamine biosynthesis</keyword>
<keyword id="KW-0862">Zinc</keyword>
<sequence length="626" mass="69701">MTKQEKAINLSESAQVDQQSVQPFPRSRKVYVEGSRPDIRVPMREISLDDTPTDFGGESNAPVLVYDTSGPYTDPDVIIDVRKGLADVRSAWIEARGDTERLEGLSSDFGQQRLNDAELAKLRFAHVRNPRRAKAGANVSQMHYARQGIITAEMEYVAIRENMKLQEARAAGLLNEQHAGHSFGANIPKEITPEFVRQEIARGRAIIPANINHPEVEPMIIGRNFLVKINGNIGNSALGSSIEEEVAKLTWGIRWGSDTVMDLSTGKHIHETREWIIRNSPVPIGTVPIYQALEKVNGVAEDLTWELFRDTLIEQAEQGVDYFTIHAGVLLRYVPLTAKRVTGIVSRGGSIMAKWCLAHHKENFLYTHFDEICEIMKAYDVSFSLGDGLRPGSIADANDAAQFGELETLGELTKIAWKHDVQCMIEGPGHVPMQLIKENMDKQLECCDEAPFYTLGPLTTDIAPGYDHITSGIGAAMIGWFGCAMLCYVTPKEHLGLPNKDDVKTGIITYKIAAHAADLAKGHPGAQIRDNALSKARFEFRWEDQFNLGLDPDTARAFHDETLPKESAKVAHFCSMCGPKFCSMKITQEVREYAAKIEAVDVTVEQGMREQAERFRQEGSQLYHKV</sequence>
<comment type="function">
    <text evidence="1">Catalyzes the synthesis of the hydroxymethylpyrimidine phosphate (HMP-P) moiety of thiamine from aminoimidazole ribotide (AIR) in a radical S-adenosyl-L-methionine (SAM)-dependent reaction.</text>
</comment>
<comment type="catalytic activity">
    <reaction evidence="1">
        <text>5-amino-1-(5-phospho-beta-D-ribosyl)imidazole + S-adenosyl-L-methionine = 4-amino-2-methyl-5-(phosphooxymethyl)pyrimidine + CO + 5'-deoxyadenosine + formate + L-methionine + 3 H(+)</text>
        <dbReference type="Rhea" id="RHEA:24840"/>
        <dbReference type="ChEBI" id="CHEBI:15378"/>
        <dbReference type="ChEBI" id="CHEBI:15740"/>
        <dbReference type="ChEBI" id="CHEBI:17245"/>
        <dbReference type="ChEBI" id="CHEBI:17319"/>
        <dbReference type="ChEBI" id="CHEBI:57844"/>
        <dbReference type="ChEBI" id="CHEBI:58354"/>
        <dbReference type="ChEBI" id="CHEBI:59789"/>
        <dbReference type="ChEBI" id="CHEBI:137981"/>
        <dbReference type="EC" id="4.1.99.17"/>
    </reaction>
</comment>
<comment type="cofactor">
    <cofactor evidence="1">
        <name>[4Fe-4S] cluster</name>
        <dbReference type="ChEBI" id="CHEBI:49883"/>
    </cofactor>
    <text evidence="1">Binds 1 [4Fe-4S] cluster per subunit. The cluster is coordinated with 3 cysteines and an exchangeable S-adenosyl-L-methionine.</text>
</comment>
<comment type="pathway">
    <text evidence="1">Cofactor biosynthesis; thiamine diphosphate biosynthesis.</text>
</comment>
<comment type="subunit">
    <text evidence="1">Homodimer.</text>
</comment>
<comment type="similarity">
    <text evidence="1">Belongs to the ThiC family.</text>
</comment>
<feature type="chain" id="PRO_1000004795" description="Phosphomethylpyrimidine synthase">
    <location>
        <begin position="1"/>
        <end position="626"/>
    </location>
</feature>
<feature type="region of interest" description="Disordered" evidence="2">
    <location>
        <begin position="1"/>
        <end position="22"/>
    </location>
</feature>
<feature type="compositionally biased region" description="Polar residues" evidence="2">
    <location>
        <begin position="10"/>
        <end position="22"/>
    </location>
</feature>
<feature type="binding site" evidence="1">
    <location>
        <position position="232"/>
    </location>
    <ligand>
        <name>substrate</name>
    </ligand>
</feature>
<feature type="binding site" evidence="1">
    <location>
        <position position="261"/>
    </location>
    <ligand>
        <name>substrate</name>
    </ligand>
</feature>
<feature type="binding site" evidence="1">
    <location>
        <position position="290"/>
    </location>
    <ligand>
        <name>substrate</name>
    </ligand>
</feature>
<feature type="binding site" evidence="1">
    <location>
        <position position="326"/>
    </location>
    <ligand>
        <name>substrate</name>
    </ligand>
</feature>
<feature type="binding site" evidence="1">
    <location>
        <begin position="346"/>
        <end position="348"/>
    </location>
    <ligand>
        <name>substrate</name>
    </ligand>
</feature>
<feature type="binding site" evidence="1">
    <location>
        <begin position="387"/>
        <end position="390"/>
    </location>
    <ligand>
        <name>substrate</name>
    </ligand>
</feature>
<feature type="binding site" evidence="1">
    <location>
        <position position="426"/>
    </location>
    <ligand>
        <name>substrate</name>
    </ligand>
</feature>
<feature type="binding site" evidence="1">
    <location>
        <position position="430"/>
    </location>
    <ligand>
        <name>Zn(2+)</name>
        <dbReference type="ChEBI" id="CHEBI:29105"/>
    </ligand>
</feature>
<feature type="binding site" evidence="1">
    <location>
        <position position="453"/>
    </location>
    <ligand>
        <name>substrate</name>
    </ligand>
</feature>
<feature type="binding site" evidence="1">
    <location>
        <position position="494"/>
    </location>
    <ligand>
        <name>Zn(2+)</name>
        <dbReference type="ChEBI" id="CHEBI:29105"/>
    </ligand>
</feature>
<feature type="binding site" evidence="1">
    <location>
        <position position="574"/>
    </location>
    <ligand>
        <name>[4Fe-4S] cluster</name>
        <dbReference type="ChEBI" id="CHEBI:49883"/>
        <note>4Fe-4S-S-AdoMet</note>
    </ligand>
</feature>
<feature type="binding site" evidence="1">
    <location>
        <position position="577"/>
    </location>
    <ligand>
        <name>[4Fe-4S] cluster</name>
        <dbReference type="ChEBI" id="CHEBI:49883"/>
        <note>4Fe-4S-S-AdoMet</note>
    </ligand>
</feature>
<feature type="binding site" evidence="1">
    <location>
        <position position="582"/>
    </location>
    <ligand>
        <name>[4Fe-4S] cluster</name>
        <dbReference type="ChEBI" id="CHEBI:49883"/>
        <note>4Fe-4S-S-AdoMet</note>
    </ligand>
</feature>